<sequence length="656" mass="72152">MAIFARRIGLNQHSAYGSRQRVIVMKNFGKKALIKQQSPKRVAWTGALAASLIMLPTMFGGNPVLAQKAERESLSYGELIQKVNQEQVKRVELDETEQIAKVYLKGQKPDAPPIQVRLLEQNNELINRLKEKNVDFGEISSANSRAAVGLLINLMWILPLVALMLLFLRRSTNASSQAMNFGKSRARFQMEAKTGVKFDDVAGIEEAKEELQEVVTFLKQPERFTAVGARIPKGVLLVGPPGTGKTLLAKAIAGEAAVPFFSISGSEFVEMFVGVGASRVRDLFKKAKDNAPCLIFIDEIDAVGRQRGTGIGGGNDEREQTLNQLLTEMDGFEGNTGIIIIAATNRPDVLDSALLRPGRFDRQVIVDAPDLKGRLEILQVHSRNKKVDPSVSLEAIARRTPGFTGADLANLLNEAAILTARRRKEAITILEIDDAVDRVVAGMEGTPLVDSKSKRLIAYHEVGHGLVGTLLKDHDPVQKVTLIPRGQAQGLTWFTPNEEQGLISRSQLKARITSTLAGRAAEEIVFGKPEVTTGAGDDLQKVTSMARQMVTKFGMSELGPLSLENQSGEVFLGRDWMNKSDYSEEIAAKIDSQVREIINTCYQTSKELLQTNRVVMERLVDLLTEQETIEGDLFRKIVSESQNPVVDEQLSMVNSQ</sequence>
<name>FTSH_NOSS1</name>
<reference key="1">
    <citation type="journal article" date="2001" name="DNA Res.">
        <title>Complete genomic sequence of the filamentous nitrogen-fixing cyanobacterium Anabaena sp. strain PCC 7120.</title>
        <authorList>
            <person name="Kaneko T."/>
            <person name="Nakamura Y."/>
            <person name="Wolk C.P."/>
            <person name="Kuritz T."/>
            <person name="Sasamoto S."/>
            <person name="Watanabe A."/>
            <person name="Iriguchi M."/>
            <person name="Ishikawa A."/>
            <person name="Kawashima K."/>
            <person name="Kimura T."/>
            <person name="Kishida Y."/>
            <person name="Kohara M."/>
            <person name="Matsumoto M."/>
            <person name="Matsuno A."/>
            <person name="Muraki A."/>
            <person name="Nakazaki N."/>
            <person name="Shimpo S."/>
            <person name="Sugimoto M."/>
            <person name="Takazawa M."/>
            <person name="Yamada M."/>
            <person name="Yasuda M."/>
            <person name="Tabata S."/>
        </authorList>
    </citation>
    <scope>NUCLEOTIDE SEQUENCE [LARGE SCALE GENOMIC DNA]</scope>
    <source>
        <strain>PCC 7120 / SAG 25.82 / UTEX 2576</strain>
    </source>
</reference>
<gene>
    <name evidence="1" type="primary">ftsH</name>
    <name type="ordered locus">all4776</name>
</gene>
<comment type="function">
    <text evidence="1">Acts as a processive, ATP-dependent zinc metallopeptidase for both cytoplasmic and membrane proteins. Plays a role in the quality control of integral membrane proteins.</text>
</comment>
<comment type="cofactor">
    <cofactor evidence="1">
        <name>Zn(2+)</name>
        <dbReference type="ChEBI" id="CHEBI:29105"/>
    </cofactor>
    <text evidence="1">Binds 1 zinc ion per subunit.</text>
</comment>
<comment type="subunit">
    <text evidence="1">Homohexamer.</text>
</comment>
<comment type="subcellular location">
    <subcellularLocation>
        <location evidence="1">Cellular thylakoid membrane</location>
        <topology evidence="1">Multi-pass membrane protein</topology>
        <orientation evidence="1">Stromal side</orientation>
    </subcellularLocation>
</comment>
<comment type="similarity">
    <text evidence="1">In the central section; belongs to the AAA ATPase family.</text>
</comment>
<comment type="similarity">
    <text evidence="1">In the C-terminal section; belongs to the peptidase M41 family.</text>
</comment>
<feature type="chain" id="PRO_0000400323" description="ATP-dependent zinc metalloprotease FtsH">
    <location>
        <begin position="1"/>
        <end position="656"/>
    </location>
</feature>
<feature type="topological domain" description="Cytoplasmic" evidence="1">
    <location>
        <begin position="1"/>
        <end position="45"/>
    </location>
</feature>
<feature type="transmembrane region" description="Helical" evidence="1">
    <location>
        <begin position="46"/>
        <end position="66"/>
    </location>
</feature>
<feature type="topological domain" description="Lumenal" evidence="1">
    <location>
        <begin position="67"/>
        <end position="147"/>
    </location>
</feature>
<feature type="transmembrane region" description="Helical" evidence="1">
    <location>
        <begin position="148"/>
        <end position="168"/>
    </location>
</feature>
<feature type="topological domain" description="Cytoplasmic" evidence="1">
    <location>
        <begin position="169"/>
        <end position="656"/>
    </location>
</feature>
<feature type="active site" evidence="1">
    <location>
        <position position="461"/>
    </location>
</feature>
<feature type="binding site" evidence="1">
    <location>
        <begin position="239"/>
        <end position="246"/>
    </location>
    <ligand>
        <name>ATP</name>
        <dbReference type="ChEBI" id="CHEBI:30616"/>
    </ligand>
</feature>
<feature type="binding site" evidence="1">
    <location>
        <position position="460"/>
    </location>
    <ligand>
        <name>Zn(2+)</name>
        <dbReference type="ChEBI" id="CHEBI:29105"/>
        <note>catalytic</note>
    </ligand>
</feature>
<feature type="binding site" evidence="1">
    <location>
        <position position="464"/>
    </location>
    <ligand>
        <name>Zn(2+)</name>
        <dbReference type="ChEBI" id="CHEBI:29105"/>
        <note>catalytic</note>
    </ligand>
</feature>
<feature type="binding site" evidence="1">
    <location>
        <position position="538"/>
    </location>
    <ligand>
        <name>Zn(2+)</name>
        <dbReference type="ChEBI" id="CHEBI:29105"/>
        <note>catalytic</note>
    </ligand>
</feature>
<protein>
    <recommendedName>
        <fullName evidence="1">ATP-dependent zinc metalloprotease FtsH</fullName>
        <ecNumber evidence="1">3.4.24.-</ecNumber>
    </recommendedName>
</protein>
<accession>Q8YMZ8</accession>
<organism>
    <name type="scientific">Nostoc sp. (strain PCC 7120 / SAG 25.82 / UTEX 2576)</name>
    <dbReference type="NCBI Taxonomy" id="103690"/>
    <lineage>
        <taxon>Bacteria</taxon>
        <taxon>Bacillati</taxon>
        <taxon>Cyanobacteriota</taxon>
        <taxon>Cyanophyceae</taxon>
        <taxon>Nostocales</taxon>
        <taxon>Nostocaceae</taxon>
        <taxon>Nostoc</taxon>
    </lineage>
</organism>
<keyword id="KW-0067">ATP-binding</keyword>
<keyword id="KW-0378">Hydrolase</keyword>
<keyword id="KW-0472">Membrane</keyword>
<keyword id="KW-0479">Metal-binding</keyword>
<keyword id="KW-0482">Metalloprotease</keyword>
<keyword id="KW-0547">Nucleotide-binding</keyword>
<keyword id="KW-0645">Protease</keyword>
<keyword id="KW-1185">Reference proteome</keyword>
<keyword id="KW-0793">Thylakoid</keyword>
<keyword id="KW-0812">Transmembrane</keyword>
<keyword id="KW-1133">Transmembrane helix</keyword>
<keyword id="KW-0862">Zinc</keyword>
<proteinExistence type="inferred from homology"/>
<dbReference type="EC" id="3.4.24.-" evidence="1"/>
<dbReference type="EMBL" id="BA000019">
    <property type="protein sequence ID" value="BAB76475.1"/>
    <property type="molecule type" value="Genomic_DNA"/>
</dbReference>
<dbReference type="PIR" id="AH2402">
    <property type="entry name" value="AH2402"/>
</dbReference>
<dbReference type="SMR" id="Q8YMZ8"/>
<dbReference type="STRING" id="103690.gene:10496829"/>
<dbReference type="MEROPS" id="M41.017"/>
<dbReference type="KEGG" id="ana:all4776"/>
<dbReference type="eggNOG" id="COG0465">
    <property type="taxonomic scope" value="Bacteria"/>
</dbReference>
<dbReference type="Proteomes" id="UP000002483">
    <property type="component" value="Chromosome"/>
</dbReference>
<dbReference type="GO" id="GO:0031676">
    <property type="term" value="C:plasma membrane-derived thylakoid membrane"/>
    <property type="evidence" value="ECO:0007669"/>
    <property type="project" value="UniProtKB-SubCell"/>
</dbReference>
<dbReference type="GO" id="GO:0005524">
    <property type="term" value="F:ATP binding"/>
    <property type="evidence" value="ECO:0007669"/>
    <property type="project" value="UniProtKB-UniRule"/>
</dbReference>
<dbReference type="GO" id="GO:0016887">
    <property type="term" value="F:ATP hydrolysis activity"/>
    <property type="evidence" value="ECO:0007669"/>
    <property type="project" value="UniProtKB-UniRule"/>
</dbReference>
<dbReference type="GO" id="GO:0004176">
    <property type="term" value="F:ATP-dependent peptidase activity"/>
    <property type="evidence" value="ECO:0007669"/>
    <property type="project" value="InterPro"/>
</dbReference>
<dbReference type="GO" id="GO:0004222">
    <property type="term" value="F:metalloendopeptidase activity"/>
    <property type="evidence" value="ECO:0007669"/>
    <property type="project" value="InterPro"/>
</dbReference>
<dbReference type="GO" id="GO:0008270">
    <property type="term" value="F:zinc ion binding"/>
    <property type="evidence" value="ECO:0007669"/>
    <property type="project" value="UniProtKB-UniRule"/>
</dbReference>
<dbReference type="GO" id="GO:0030163">
    <property type="term" value="P:protein catabolic process"/>
    <property type="evidence" value="ECO:0007669"/>
    <property type="project" value="UniProtKB-UniRule"/>
</dbReference>
<dbReference type="GO" id="GO:0006508">
    <property type="term" value="P:proteolysis"/>
    <property type="evidence" value="ECO:0007669"/>
    <property type="project" value="UniProtKB-KW"/>
</dbReference>
<dbReference type="CDD" id="cd19501">
    <property type="entry name" value="RecA-like_FtsH"/>
    <property type="match status" value="1"/>
</dbReference>
<dbReference type="FunFam" id="1.10.8.60:FF:000001">
    <property type="entry name" value="ATP-dependent zinc metalloprotease FtsH"/>
    <property type="match status" value="1"/>
</dbReference>
<dbReference type="FunFam" id="1.20.58.760:FF:000001">
    <property type="entry name" value="ATP-dependent zinc metalloprotease FtsH"/>
    <property type="match status" value="1"/>
</dbReference>
<dbReference type="FunFam" id="3.40.50.300:FF:000001">
    <property type="entry name" value="ATP-dependent zinc metalloprotease FtsH"/>
    <property type="match status" value="1"/>
</dbReference>
<dbReference type="Gene3D" id="1.10.8.60">
    <property type="match status" value="1"/>
</dbReference>
<dbReference type="Gene3D" id="3.30.720.210">
    <property type="match status" value="1"/>
</dbReference>
<dbReference type="Gene3D" id="3.40.50.300">
    <property type="entry name" value="P-loop containing nucleotide triphosphate hydrolases"/>
    <property type="match status" value="1"/>
</dbReference>
<dbReference type="Gene3D" id="1.20.58.760">
    <property type="entry name" value="Peptidase M41"/>
    <property type="match status" value="1"/>
</dbReference>
<dbReference type="HAMAP" id="MF_01458">
    <property type="entry name" value="FtsH"/>
    <property type="match status" value="1"/>
</dbReference>
<dbReference type="InterPro" id="IPR003593">
    <property type="entry name" value="AAA+_ATPase"/>
</dbReference>
<dbReference type="InterPro" id="IPR041569">
    <property type="entry name" value="AAA_lid_3"/>
</dbReference>
<dbReference type="InterPro" id="IPR003959">
    <property type="entry name" value="ATPase_AAA_core"/>
</dbReference>
<dbReference type="InterPro" id="IPR003960">
    <property type="entry name" value="ATPase_AAA_CS"/>
</dbReference>
<dbReference type="InterPro" id="IPR005936">
    <property type="entry name" value="FtsH"/>
</dbReference>
<dbReference type="InterPro" id="IPR027417">
    <property type="entry name" value="P-loop_NTPase"/>
</dbReference>
<dbReference type="InterPro" id="IPR000642">
    <property type="entry name" value="Peptidase_M41"/>
</dbReference>
<dbReference type="InterPro" id="IPR037219">
    <property type="entry name" value="Peptidase_M41-like"/>
</dbReference>
<dbReference type="NCBIfam" id="TIGR01241">
    <property type="entry name" value="FtsH_fam"/>
    <property type="match status" value="1"/>
</dbReference>
<dbReference type="PANTHER" id="PTHR23076:SF139">
    <property type="entry name" value="ATP-DEPENDENT ZINC METALLOPROTEASE FTSH 2, CHLOROPLASTIC"/>
    <property type="match status" value="1"/>
</dbReference>
<dbReference type="PANTHER" id="PTHR23076">
    <property type="entry name" value="METALLOPROTEASE M41 FTSH"/>
    <property type="match status" value="1"/>
</dbReference>
<dbReference type="Pfam" id="PF00004">
    <property type="entry name" value="AAA"/>
    <property type="match status" value="1"/>
</dbReference>
<dbReference type="Pfam" id="PF17862">
    <property type="entry name" value="AAA_lid_3"/>
    <property type="match status" value="1"/>
</dbReference>
<dbReference type="Pfam" id="PF01434">
    <property type="entry name" value="Peptidase_M41"/>
    <property type="match status" value="1"/>
</dbReference>
<dbReference type="SMART" id="SM00382">
    <property type="entry name" value="AAA"/>
    <property type="match status" value="1"/>
</dbReference>
<dbReference type="SUPFAM" id="SSF140990">
    <property type="entry name" value="FtsH protease domain-like"/>
    <property type="match status" value="1"/>
</dbReference>
<dbReference type="SUPFAM" id="SSF52540">
    <property type="entry name" value="P-loop containing nucleoside triphosphate hydrolases"/>
    <property type="match status" value="1"/>
</dbReference>
<dbReference type="PROSITE" id="PS00674">
    <property type="entry name" value="AAA"/>
    <property type="match status" value="1"/>
</dbReference>
<evidence type="ECO:0000255" key="1">
    <source>
        <dbReference type="HAMAP-Rule" id="MF_01458"/>
    </source>
</evidence>